<gene>
    <name evidence="1" type="primary">rplI</name>
    <name type="ordered locus">MSC_0955</name>
</gene>
<evidence type="ECO:0000255" key="1">
    <source>
        <dbReference type="HAMAP-Rule" id="MF_00503"/>
    </source>
</evidence>
<evidence type="ECO:0000305" key="2"/>
<name>RL9_MYCMS</name>
<feature type="chain" id="PRO_0000236547" description="Large ribosomal subunit protein bL9">
    <location>
        <begin position="1"/>
        <end position="153"/>
    </location>
</feature>
<proteinExistence type="inferred from homology"/>
<keyword id="KW-1185">Reference proteome</keyword>
<keyword id="KW-0687">Ribonucleoprotein</keyword>
<keyword id="KW-0689">Ribosomal protein</keyword>
<keyword id="KW-0694">RNA-binding</keyword>
<keyword id="KW-0699">rRNA-binding</keyword>
<sequence length="153" mass="17785">MKVIFLKDVPNQGKKNEIKEVSDGYARNYLLPNQLVKIATNNSIQTLKDHLKADQEEKELAKAQTKQIKKTLEELTLHFKLQTNDDKVFGSISSQDIVNQLKDVHRIEIDKKKFIHFKNINKIGINYVKVKLDFGIEALIKIDVKEVQKWNKN</sequence>
<dbReference type="EMBL" id="BX293980">
    <property type="protein sequence ID" value="CAE77564.1"/>
    <property type="status" value="ALT_INIT"/>
    <property type="molecule type" value="Genomic_DNA"/>
</dbReference>
<dbReference type="RefSeq" id="NP_975922.1">
    <property type="nucleotide sequence ID" value="NC_005364.2"/>
</dbReference>
<dbReference type="RefSeq" id="WP_015545494.1">
    <property type="nucleotide sequence ID" value="NC_005364.2"/>
</dbReference>
<dbReference type="SMR" id="Q6MS27"/>
<dbReference type="STRING" id="272632.MSC_0955"/>
<dbReference type="KEGG" id="mmy:MSC_0955"/>
<dbReference type="PATRIC" id="fig|272632.4.peg.1038"/>
<dbReference type="eggNOG" id="COG0359">
    <property type="taxonomic scope" value="Bacteria"/>
</dbReference>
<dbReference type="HOGENOM" id="CLU_078938_3_2_14"/>
<dbReference type="Proteomes" id="UP000001016">
    <property type="component" value="Chromosome"/>
</dbReference>
<dbReference type="GO" id="GO:1990904">
    <property type="term" value="C:ribonucleoprotein complex"/>
    <property type="evidence" value="ECO:0007669"/>
    <property type="project" value="UniProtKB-KW"/>
</dbReference>
<dbReference type="GO" id="GO:0005840">
    <property type="term" value="C:ribosome"/>
    <property type="evidence" value="ECO:0007669"/>
    <property type="project" value="UniProtKB-KW"/>
</dbReference>
<dbReference type="GO" id="GO:0019843">
    <property type="term" value="F:rRNA binding"/>
    <property type="evidence" value="ECO:0007669"/>
    <property type="project" value="UniProtKB-UniRule"/>
</dbReference>
<dbReference type="GO" id="GO:0003735">
    <property type="term" value="F:structural constituent of ribosome"/>
    <property type="evidence" value="ECO:0007669"/>
    <property type="project" value="InterPro"/>
</dbReference>
<dbReference type="GO" id="GO:0006412">
    <property type="term" value="P:translation"/>
    <property type="evidence" value="ECO:0007669"/>
    <property type="project" value="UniProtKB-UniRule"/>
</dbReference>
<dbReference type="Gene3D" id="3.10.430.100">
    <property type="entry name" value="Ribosomal protein L9, C-terminal domain"/>
    <property type="match status" value="1"/>
</dbReference>
<dbReference type="Gene3D" id="3.40.5.10">
    <property type="entry name" value="Ribosomal protein L9, N-terminal domain"/>
    <property type="match status" value="1"/>
</dbReference>
<dbReference type="HAMAP" id="MF_00503">
    <property type="entry name" value="Ribosomal_bL9"/>
    <property type="match status" value="1"/>
</dbReference>
<dbReference type="InterPro" id="IPR000244">
    <property type="entry name" value="Ribosomal_bL9"/>
</dbReference>
<dbReference type="InterPro" id="IPR009027">
    <property type="entry name" value="Ribosomal_bL9/RNase_H1_N"/>
</dbReference>
<dbReference type="InterPro" id="IPR020594">
    <property type="entry name" value="Ribosomal_bL9_bac/chp"/>
</dbReference>
<dbReference type="InterPro" id="IPR020069">
    <property type="entry name" value="Ribosomal_bL9_C"/>
</dbReference>
<dbReference type="InterPro" id="IPR036791">
    <property type="entry name" value="Ribosomal_bL9_C_sf"/>
</dbReference>
<dbReference type="InterPro" id="IPR020070">
    <property type="entry name" value="Ribosomal_bL9_N"/>
</dbReference>
<dbReference type="InterPro" id="IPR036935">
    <property type="entry name" value="Ribosomal_bL9_N_sf"/>
</dbReference>
<dbReference type="NCBIfam" id="TIGR00158">
    <property type="entry name" value="L9"/>
    <property type="match status" value="1"/>
</dbReference>
<dbReference type="PANTHER" id="PTHR21368">
    <property type="entry name" value="50S RIBOSOMAL PROTEIN L9"/>
    <property type="match status" value="1"/>
</dbReference>
<dbReference type="Pfam" id="PF03948">
    <property type="entry name" value="Ribosomal_L9_C"/>
    <property type="match status" value="1"/>
</dbReference>
<dbReference type="Pfam" id="PF01281">
    <property type="entry name" value="Ribosomal_L9_N"/>
    <property type="match status" value="1"/>
</dbReference>
<dbReference type="SUPFAM" id="SSF55658">
    <property type="entry name" value="L9 N-domain-like"/>
    <property type="match status" value="1"/>
</dbReference>
<dbReference type="SUPFAM" id="SSF55653">
    <property type="entry name" value="Ribosomal protein L9 C-domain"/>
    <property type="match status" value="1"/>
</dbReference>
<protein>
    <recommendedName>
        <fullName evidence="1">Large ribosomal subunit protein bL9</fullName>
    </recommendedName>
    <alternativeName>
        <fullName evidence="2">50S ribosomal protein L9</fullName>
    </alternativeName>
</protein>
<organism>
    <name type="scientific">Mycoplasma mycoides subsp. mycoides SC (strain CCUG 32753 / NCTC 10114 / PG1)</name>
    <dbReference type="NCBI Taxonomy" id="272632"/>
    <lineage>
        <taxon>Bacteria</taxon>
        <taxon>Bacillati</taxon>
        <taxon>Mycoplasmatota</taxon>
        <taxon>Mollicutes</taxon>
        <taxon>Mycoplasmataceae</taxon>
        <taxon>Mycoplasma</taxon>
    </lineage>
</organism>
<comment type="function">
    <text evidence="1">Binds to the 23S rRNA.</text>
</comment>
<comment type="similarity">
    <text evidence="1">Belongs to the bacterial ribosomal protein bL9 family.</text>
</comment>
<comment type="sequence caution" evidence="2">
    <conflict type="erroneous initiation">
        <sequence resource="EMBL-CDS" id="CAE77564"/>
    </conflict>
</comment>
<reference key="1">
    <citation type="journal article" date="2004" name="Genome Res.">
        <title>The genome sequence of Mycoplasma mycoides subsp. mycoides SC type strain PG1T, the causative agent of contagious bovine pleuropneumonia (CBPP).</title>
        <authorList>
            <person name="Westberg J."/>
            <person name="Persson A."/>
            <person name="Holmberg A."/>
            <person name="Goesmann A."/>
            <person name="Lundeberg J."/>
            <person name="Johansson K.-E."/>
            <person name="Pettersson B."/>
            <person name="Uhlen M."/>
        </authorList>
    </citation>
    <scope>NUCLEOTIDE SEQUENCE [LARGE SCALE GENOMIC DNA]</scope>
    <source>
        <strain>CCUG 32753 / NCTC 10114 / PG1</strain>
    </source>
</reference>
<accession>Q6MS27</accession>